<protein>
    <recommendedName>
        <fullName evidence="1">Aliphatic sulfonates import ATP-binding protein SsuB 2</fullName>
        <ecNumber evidence="1">7.6.2.14</ecNumber>
    </recommendedName>
</protein>
<comment type="function">
    <text evidence="1">Part of the ABC transporter complex SsuABC involved in aliphatic sulfonates import. Responsible for energy coupling to the transport system.</text>
</comment>
<comment type="catalytic activity">
    <reaction evidence="1">
        <text>ATP + H2O + aliphatic sulfonate-[sulfonate-binding protein]Side 1 = ADP + phosphate + aliphatic sulfonateSide 2 + [sulfonate-binding protein]Side 1.</text>
        <dbReference type="EC" id="7.6.2.14"/>
    </reaction>
</comment>
<comment type="subunit">
    <text evidence="1">The complex is composed of two ATP-binding proteins (SsuB), two transmembrane proteins (SsuC) and a solute-binding protein (SsuA).</text>
</comment>
<comment type="subcellular location">
    <subcellularLocation>
        <location evidence="1">Cell inner membrane</location>
        <topology evidence="1">Peripheral membrane protein</topology>
    </subcellularLocation>
</comment>
<comment type="similarity">
    <text evidence="1">Belongs to the ABC transporter superfamily. Aliphatic sulfonates importer (TC 3.A.1.17.2) family.</text>
</comment>
<gene>
    <name evidence="1" type="primary">ssuB2</name>
    <name type="ordered locus">Bcen2424_6755</name>
</gene>
<proteinExistence type="inferred from homology"/>
<feature type="chain" id="PRO_0000279898" description="Aliphatic sulfonates import ATP-binding protein SsuB 2">
    <location>
        <begin position="1"/>
        <end position="270"/>
    </location>
</feature>
<feature type="domain" description="ABC transporter" evidence="1">
    <location>
        <begin position="17"/>
        <end position="241"/>
    </location>
</feature>
<feature type="binding site" evidence="1">
    <location>
        <begin position="50"/>
        <end position="57"/>
    </location>
    <ligand>
        <name>ATP</name>
        <dbReference type="ChEBI" id="CHEBI:30616"/>
    </ligand>
</feature>
<dbReference type="EC" id="7.6.2.14" evidence="1"/>
<dbReference type="EMBL" id="CP000460">
    <property type="protein sequence ID" value="ABK13484.1"/>
    <property type="molecule type" value="Genomic_DNA"/>
</dbReference>
<dbReference type="RefSeq" id="WP_011549913.1">
    <property type="nucleotide sequence ID" value="NC_008544.1"/>
</dbReference>
<dbReference type="SMR" id="A0KE71"/>
<dbReference type="KEGG" id="bch:Bcen2424_6755"/>
<dbReference type="HOGENOM" id="CLU_000604_1_22_4"/>
<dbReference type="GO" id="GO:0005886">
    <property type="term" value="C:plasma membrane"/>
    <property type="evidence" value="ECO:0007669"/>
    <property type="project" value="UniProtKB-SubCell"/>
</dbReference>
<dbReference type="GO" id="GO:0005524">
    <property type="term" value="F:ATP binding"/>
    <property type="evidence" value="ECO:0007669"/>
    <property type="project" value="UniProtKB-KW"/>
</dbReference>
<dbReference type="GO" id="GO:0016887">
    <property type="term" value="F:ATP hydrolysis activity"/>
    <property type="evidence" value="ECO:0007669"/>
    <property type="project" value="InterPro"/>
</dbReference>
<dbReference type="CDD" id="cd03293">
    <property type="entry name" value="ABC_NrtD_SsuB_transporters"/>
    <property type="match status" value="1"/>
</dbReference>
<dbReference type="Gene3D" id="3.40.50.300">
    <property type="entry name" value="P-loop containing nucleotide triphosphate hydrolases"/>
    <property type="match status" value="1"/>
</dbReference>
<dbReference type="InterPro" id="IPR003593">
    <property type="entry name" value="AAA+_ATPase"/>
</dbReference>
<dbReference type="InterPro" id="IPR003439">
    <property type="entry name" value="ABC_transporter-like_ATP-bd"/>
</dbReference>
<dbReference type="InterPro" id="IPR017871">
    <property type="entry name" value="ABC_transporter-like_CS"/>
</dbReference>
<dbReference type="InterPro" id="IPR050166">
    <property type="entry name" value="ABC_transporter_ATP-bind"/>
</dbReference>
<dbReference type="InterPro" id="IPR027417">
    <property type="entry name" value="P-loop_NTPase"/>
</dbReference>
<dbReference type="PANTHER" id="PTHR42788:SF19">
    <property type="entry name" value="ALIPHATIC SULFONATES IMPORT ATP-BINDING PROTEIN SSUB 2"/>
    <property type="match status" value="1"/>
</dbReference>
<dbReference type="PANTHER" id="PTHR42788">
    <property type="entry name" value="TAURINE IMPORT ATP-BINDING PROTEIN-RELATED"/>
    <property type="match status" value="1"/>
</dbReference>
<dbReference type="Pfam" id="PF00005">
    <property type="entry name" value="ABC_tran"/>
    <property type="match status" value="1"/>
</dbReference>
<dbReference type="SMART" id="SM00382">
    <property type="entry name" value="AAA"/>
    <property type="match status" value="1"/>
</dbReference>
<dbReference type="SUPFAM" id="SSF52540">
    <property type="entry name" value="P-loop containing nucleoside triphosphate hydrolases"/>
    <property type="match status" value="1"/>
</dbReference>
<dbReference type="PROSITE" id="PS00211">
    <property type="entry name" value="ABC_TRANSPORTER_1"/>
    <property type="match status" value="1"/>
</dbReference>
<dbReference type="PROSITE" id="PS50893">
    <property type="entry name" value="ABC_TRANSPORTER_2"/>
    <property type="match status" value="1"/>
</dbReference>
<dbReference type="PROSITE" id="PS51291">
    <property type="entry name" value="SSUB"/>
    <property type="match status" value="1"/>
</dbReference>
<evidence type="ECO:0000255" key="1">
    <source>
        <dbReference type="HAMAP-Rule" id="MF_01724"/>
    </source>
</evidence>
<reference key="1">
    <citation type="submission" date="2006-08" db="EMBL/GenBank/DDBJ databases">
        <title>Complete sequence of chromosome 3 of Burkholderia cenocepacia HI2424.</title>
        <authorList>
            <person name="Copeland A."/>
            <person name="Lucas S."/>
            <person name="Lapidus A."/>
            <person name="Barry K."/>
            <person name="Detter J.C."/>
            <person name="Glavina del Rio T."/>
            <person name="Hammon N."/>
            <person name="Israni S."/>
            <person name="Pitluck S."/>
            <person name="Chain P."/>
            <person name="Malfatti S."/>
            <person name="Shin M."/>
            <person name="Vergez L."/>
            <person name="Schmutz J."/>
            <person name="Larimer F."/>
            <person name="Land M."/>
            <person name="Hauser L."/>
            <person name="Kyrpides N."/>
            <person name="Kim E."/>
            <person name="LiPuma J.J."/>
            <person name="Gonzalez C.F."/>
            <person name="Konstantinidis K."/>
            <person name="Tiedje J.M."/>
            <person name="Richardson P."/>
        </authorList>
    </citation>
    <scope>NUCLEOTIDE SEQUENCE [LARGE SCALE GENOMIC DNA]</scope>
    <source>
        <strain>HI2424</strain>
    </source>
</reference>
<accession>A0KE71</accession>
<keyword id="KW-0067">ATP-binding</keyword>
<keyword id="KW-0997">Cell inner membrane</keyword>
<keyword id="KW-1003">Cell membrane</keyword>
<keyword id="KW-0472">Membrane</keyword>
<keyword id="KW-0547">Nucleotide-binding</keyword>
<keyword id="KW-1278">Translocase</keyword>
<keyword id="KW-0813">Transport</keyword>
<organism>
    <name type="scientific">Burkholderia cenocepacia (strain HI2424)</name>
    <dbReference type="NCBI Taxonomy" id="331272"/>
    <lineage>
        <taxon>Bacteria</taxon>
        <taxon>Pseudomonadati</taxon>
        <taxon>Pseudomonadota</taxon>
        <taxon>Betaproteobacteria</taxon>
        <taxon>Burkholderiales</taxon>
        <taxon>Burkholderiaceae</taxon>
        <taxon>Burkholderia</taxon>
        <taxon>Burkholderia cepacia complex</taxon>
    </lineage>
</organism>
<sequence>MSASPSIRPTAGIAPPLLDLRIARKLYGDRTILSDIALQVARGEIVCVVGPSGCGKSTLLRIVAGLDPDFRGSVTLDGSALAGPSARVGVIFQEPRLLPWLSIADNVGFASGARGGRDPSVERLLDEVGLAGVARQLPATLSGGMAQRAAIARGLFGEPDLLLLDEPFSAVDAITRMRLQTLLLDVVHRHRMAAIVVTHDLDEALYLGDRVLMLAPNPGRVDDEIQVDVARPRDRRDPSLAAQRARLIDAFQRFHDRAAGDPAGIPITSA</sequence>
<name>SSUB2_BURCH</name>